<comment type="function">
    <text evidence="1">Phosphorolytic 3'-5' exoribonuclease that plays an important role in tRNA 3'-end maturation. Removes nucleotide residues following the 3'-CCA terminus of tRNAs; can also add nucleotides to the ends of RNA molecules by using nucleoside diphosphates as substrates, but this may not be physiologically important. Probably plays a role in initiation of 16S rRNA degradation (leading to ribosome degradation) during starvation.</text>
</comment>
<comment type="catalytic activity">
    <reaction evidence="1">
        <text>tRNA(n+1) + phosphate = tRNA(n) + a ribonucleoside 5'-diphosphate</text>
        <dbReference type="Rhea" id="RHEA:10628"/>
        <dbReference type="Rhea" id="RHEA-COMP:17343"/>
        <dbReference type="Rhea" id="RHEA-COMP:17344"/>
        <dbReference type="ChEBI" id="CHEBI:43474"/>
        <dbReference type="ChEBI" id="CHEBI:57930"/>
        <dbReference type="ChEBI" id="CHEBI:173114"/>
        <dbReference type="EC" id="2.7.7.56"/>
    </reaction>
</comment>
<comment type="subunit">
    <text evidence="1">Homohexameric ring arranged as a trimer of dimers.</text>
</comment>
<comment type="similarity">
    <text evidence="1">Belongs to the RNase PH family.</text>
</comment>
<name>RNPH_BEII9</name>
<accession>B2IH14</accession>
<organism>
    <name type="scientific">Beijerinckia indica subsp. indica (strain ATCC 9039 / DSM 1715 / NCIMB 8712)</name>
    <dbReference type="NCBI Taxonomy" id="395963"/>
    <lineage>
        <taxon>Bacteria</taxon>
        <taxon>Pseudomonadati</taxon>
        <taxon>Pseudomonadota</taxon>
        <taxon>Alphaproteobacteria</taxon>
        <taxon>Hyphomicrobiales</taxon>
        <taxon>Beijerinckiaceae</taxon>
        <taxon>Beijerinckia</taxon>
    </lineage>
</organism>
<keyword id="KW-0548">Nucleotidyltransferase</keyword>
<keyword id="KW-1185">Reference proteome</keyword>
<keyword id="KW-0694">RNA-binding</keyword>
<keyword id="KW-0698">rRNA processing</keyword>
<keyword id="KW-0808">Transferase</keyword>
<keyword id="KW-0819">tRNA processing</keyword>
<keyword id="KW-0820">tRNA-binding</keyword>
<sequence>MRPSKRAAQDLRPVTLERNVARYAEGSCLVKFGGTHVLCTASLEDKPPPWLRGQGRGWVTAEYAMLPRATHTRTRRESMSGKPSGRTQEIQRLIGRSLRAVTNLPALGERQITLDCDVLQADGGTRTAAITGAWVALHDCCKWMHGRSIIKEFPLREHVAAVSCGIYQGEAVLDLDYEEDSVAQTDANFVMTGGGALVEVQASAEGAVFSEDELSVLLALAKGGIAQLVNIQKLAIG</sequence>
<dbReference type="EC" id="2.7.7.56" evidence="1"/>
<dbReference type="EMBL" id="CP001016">
    <property type="protein sequence ID" value="ACB94428.1"/>
    <property type="molecule type" value="Genomic_DNA"/>
</dbReference>
<dbReference type="RefSeq" id="WP_012383785.1">
    <property type="nucleotide sequence ID" value="NC_010581.1"/>
</dbReference>
<dbReference type="SMR" id="B2IH14"/>
<dbReference type="STRING" id="395963.Bind_0778"/>
<dbReference type="KEGG" id="bid:Bind_0778"/>
<dbReference type="eggNOG" id="COG0689">
    <property type="taxonomic scope" value="Bacteria"/>
</dbReference>
<dbReference type="HOGENOM" id="CLU_050858_0_0_5"/>
<dbReference type="OrthoDB" id="9802265at2"/>
<dbReference type="Proteomes" id="UP000001695">
    <property type="component" value="Chromosome"/>
</dbReference>
<dbReference type="GO" id="GO:0000175">
    <property type="term" value="F:3'-5'-RNA exonuclease activity"/>
    <property type="evidence" value="ECO:0007669"/>
    <property type="project" value="UniProtKB-UniRule"/>
</dbReference>
<dbReference type="GO" id="GO:0000049">
    <property type="term" value="F:tRNA binding"/>
    <property type="evidence" value="ECO:0007669"/>
    <property type="project" value="UniProtKB-UniRule"/>
</dbReference>
<dbReference type="GO" id="GO:0009022">
    <property type="term" value="F:tRNA nucleotidyltransferase activity"/>
    <property type="evidence" value="ECO:0007669"/>
    <property type="project" value="UniProtKB-UniRule"/>
</dbReference>
<dbReference type="GO" id="GO:0016075">
    <property type="term" value="P:rRNA catabolic process"/>
    <property type="evidence" value="ECO:0007669"/>
    <property type="project" value="UniProtKB-UniRule"/>
</dbReference>
<dbReference type="GO" id="GO:0006364">
    <property type="term" value="P:rRNA processing"/>
    <property type="evidence" value="ECO:0007669"/>
    <property type="project" value="UniProtKB-KW"/>
</dbReference>
<dbReference type="GO" id="GO:0008033">
    <property type="term" value="P:tRNA processing"/>
    <property type="evidence" value="ECO:0007669"/>
    <property type="project" value="UniProtKB-UniRule"/>
</dbReference>
<dbReference type="CDD" id="cd11362">
    <property type="entry name" value="RNase_PH_bact"/>
    <property type="match status" value="1"/>
</dbReference>
<dbReference type="FunFam" id="3.30.230.70:FF:000003">
    <property type="entry name" value="Ribonuclease PH"/>
    <property type="match status" value="1"/>
</dbReference>
<dbReference type="Gene3D" id="3.30.230.70">
    <property type="entry name" value="GHMP Kinase, N-terminal domain"/>
    <property type="match status" value="1"/>
</dbReference>
<dbReference type="HAMAP" id="MF_00564">
    <property type="entry name" value="RNase_PH"/>
    <property type="match status" value="1"/>
</dbReference>
<dbReference type="InterPro" id="IPR001247">
    <property type="entry name" value="ExoRNase_PH_dom1"/>
</dbReference>
<dbReference type="InterPro" id="IPR015847">
    <property type="entry name" value="ExoRNase_PH_dom2"/>
</dbReference>
<dbReference type="InterPro" id="IPR036345">
    <property type="entry name" value="ExoRNase_PH_dom2_sf"/>
</dbReference>
<dbReference type="InterPro" id="IPR027408">
    <property type="entry name" value="PNPase/RNase_PH_dom_sf"/>
</dbReference>
<dbReference type="InterPro" id="IPR020568">
    <property type="entry name" value="Ribosomal_Su5_D2-typ_SF"/>
</dbReference>
<dbReference type="InterPro" id="IPR050080">
    <property type="entry name" value="RNase_PH"/>
</dbReference>
<dbReference type="InterPro" id="IPR002381">
    <property type="entry name" value="RNase_PH_bac-type"/>
</dbReference>
<dbReference type="InterPro" id="IPR018336">
    <property type="entry name" value="RNase_PH_CS"/>
</dbReference>
<dbReference type="NCBIfam" id="TIGR01966">
    <property type="entry name" value="RNasePH"/>
    <property type="match status" value="1"/>
</dbReference>
<dbReference type="PANTHER" id="PTHR11953">
    <property type="entry name" value="EXOSOME COMPLEX COMPONENT"/>
    <property type="match status" value="1"/>
</dbReference>
<dbReference type="PANTHER" id="PTHR11953:SF0">
    <property type="entry name" value="EXOSOME COMPLEX COMPONENT RRP41"/>
    <property type="match status" value="1"/>
</dbReference>
<dbReference type="Pfam" id="PF01138">
    <property type="entry name" value="RNase_PH"/>
    <property type="match status" value="1"/>
</dbReference>
<dbReference type="Pfam" id="PF03725">
    <property type="entry name" value="RNase_PH_C"/>
    <property type="match status" value="1"/>
</dbReference>
<dbReference type="SUPFAM" id="SSF55666">
    <property type="entry name" value="Ribonuclease PH domain 2-like"/>
    <property type="match status" value="1"/>
</dbReference>
<dbReference type="SUPFAM" id="SSF54211">
    <property type="entry name" value="Ribosomal protein S5 domain 2-like"/>
    <property type="match status" value="1"/>
</dbReference>
<dbReference type="PROSITE" id="PS01277">
    <property type="entry name" value="RIBONUCLEASE_PH"/>
    <property type="match status" value="1"/>
</dbReference>
<proteinExistence type="inferred from homology"/>
<feature type="chain" id="PRO_1000129323" description="Ribonuclease PH">
    <location>
        <begin position="1"/>
        <end position="237"/>
    </location>
</feature>
<feature type="binding site" evidence="1">
    <location>
        <position position="86"/>
    </location>
    <ligand>
        <name>phosphate</name>
        <dbReference type="ChEBI" id="CHEBI:43474"/>
        <note>substrate</note>
    </ligand>
</feature>
<feature type="binding site" evidence="1">
    <location>
        <begin position="124"/>
        <end position="126"/>
    </location>
    <ligand>
        <name>phosphate</name>
        <dbReference type="ChEBI" id="CHEBI:43474"/>
        <note>substrate</note>
    </ligand>
</feature>
<evidence type="ECO:0000255" key="1">
    <source>
        <dbReference type="HAMAP-Rule" id="MF_00564"/>
    </source>
</evidence>
<reference key="1">
    <citation type="journal article" date="2010" name="J. Bacteriol.">
        <title>Complete genome sequence of Beijerinckia indica subsp. indica.</title>
        <authorList>
            <person name="Tamas I."/>
            <person name="Dedysh S.N."/>
            <person name="Liesack W."/>
            <person name="Stott M.B."/>
            <person name="Alam M."/>
            <person name="Murrell J.C."/>
            <person name="Dunfield P.F."/>
        </authorList>
    </citation>
    <scope>NUCLEOTIDE SEQUENCE [LARGE SCALE GENOMIC DNA]</scope>
    <source>
        <strain>ATCC 9039 / DSM 1715 / NCIMB 8712</strain>
    </source>
</reference>
<protein>
    <recommendedName>
        <fullName evidence="1">Ribonuclease PH</fullName>
        <shortName evidence="1">RNase PH</shortName>
        <ecNumber evidence="1">2.7.7.56</ecNumber>
    </recommendedName>
    <alternativeName>
        <fullName evidence="1">tRNA nucleotidyltransferase</fullName>
    </alternativeName>
</protein>
<gene>
    <name evidence="1" type="primary">rph</name>
    <name type="ordered locus">Bind_0778</name>
</gene>